<proteinExistence type="inferred from homology"/>
<comment type="function">
    <text evidence="1">Catalyzes the isomerization of 5-dehydro-4-deoxy-D-glucuronate to 3-deoxy-D-glycero-2,5-hexodiulosonate.</text>
</comment>
<comment type="catalytic activity">
    <reaction evidence="1">
        <text>5-dehydro-4-deoxy-D-glucuronate = 3-deoxy-D-glycero-2,5-hexodiulosonate</text>
        <dbReference type="Rhea" id="RHEA:23896"/>
        <dbReference type="ChEBI" id="CHEBI:17117"/>
        <dbReference type="ChEBI" id="CHEBI:29071"/>
        <dbReference type="EC" id="5.3.1.17"/>
    </reaction>
</comment>
<comment type="cofactor">
    <cofactor evidence="1">
        <name>Zn(2+)</name>
        <dbReference type="ChEBI" id="CHEBI:29105"/>
    </cofactor>
    <text evidence="1">Binds 1 zinc ion per subunit.</text>
</comment>
<comment type="pathway">
    <text evidence="1">Glycan metabolism; pectin degradation; 2-dehydro-3-deoxy-D-gluconate from pectin: step 4/5.</text>
</comment>
<comment type="subunit">
    <text evidence="1">Homohexamer.</text>
</comment>
<comment type="similarity">
    <text evidence="1">Belongs to the KduI family.</text>
</comment>
<organism>
    <name type="scientific">Escherichia coli (strain SMS-3-5 / SECEC)</name>
    <dbReference type="NCBI Taxonomy" id="439855"/>
    <lineage>
        <taxon>Bacteria</taxon>
        <taxon>Pseudomonadati</taxon>
        <taxon>Pseudomonadota</taxon>
        <taxon>Gammaproteobacteria</taxon>
        <taxon>Enterobacterales</taxon>
        <taxon>Enterobacteriaceae</taxon>
        <taxon>Escherichia</taxon>
    </lineage>
</organism>
<protein>
    <recommendedName>
        <fullName evidence="1">4-deoxy-L-threo-5-hexosulose-uronate ketol-isomerase</fullName>
        <ecNumber evidence="1">5.3.1.17</ecNumber>
    </recommendedName>
    <alternativeName>
        <fullName evidence="1">5-keto-4-deoxyuronate isomerase</fullName>
    </alternativeName>
    <alternativeName>
        <fullName evidence="1">DKI isomerase</fullName>
    </alternativeName>
</protein>
<reference key="1">
    <citation type="journal article" date="2008" name="J. Bacteriol.">
        <title>Insights into the environmental resistance gene pool from the genome sequence of the multidrug-resistant environmental isolate Escherichia coli SMS-3-5.</title>
        <authorList>
            <person name="Fricke W.F."/>
            <person name="Wright M.S."/>
            <person name="Lindell A.H."/>
            <person name="Harkins D.M."/>
            <person name="Baker-Austin C."/>
            <person name="Ravel J."/>
            <person name="Stepanauskas R."/>
        </authorList>
    </citation>
    <scope>NUCLEOTIDE SEQUENCE [LARGE SCALE GENOMIC DNA]</scope>
    <source>
        <strain>SMS-3-5 / SECEC</strain>
    </source>
</reference>
<sequence length="278" mass="31090">MDVRQSIHSAHAKTLDTQGLRNEFLVEKVFVADEYTMVYSHIDRIIVGGIMPVTKTVSVGGEVGKQLGVSYFLERRELGVINIGGAGTITVDGQCYEIGHREALYVGKGAKEVVFASIDTATPAKFYYNCAPAHTTYPTKKVTPDEVSPVTLGDNLTSNRRTINKYFVPDVLETCQLSMGLTELAPGNLWNTMPCHTHERRMEVYFYFNMDDDACVFHMMGQPQETRHIVMHNEQAVISPSWSIHSGVGTKAYTFIWGMVGENQVFDDMDHVAVKDLR</sequence>
<feature type="chain" id="PRO_1000131885" description="4-deoxy-L-threo-5-hexosulose-uronate ketol-isomerase">
    <location>
        <begin position="1"/>
        <end position="278"/>
    </location>
</feature>
<feature type="binding site" evidence="1">
    <location>
        <position position="196"/>
    </location>
    <ligand>
        <name>Zn(2+)</name>
        <dbReference type="ChEBI" id="CHEBI:29105"/>
    </ligand>
</feature>
<feature type="binding site" evidence="1">
    <location>
        <position position="198"/>
    </location>
    <ligand>
        <name>Zn(2+)</name>
        <dbReference type="ChEBI" id="CHEBI:29105"/>
    </ligand>
</feature>
<feature type="binding site" evidence="1">
    <location>
        <position position="203"/>
    </location>
    <ligand>
        <name>Zn(2+)</name>
        <dbReference type="ChEBI" id="CHEBI:29105"/>
    </ligand>
</feature>
<feature type="binding site" evidence="1">
    <location>
        <position position="245"/>
    </location>
    <ligand>
        <name>Zn(2+)</name>
        <dbReference type="ChEBI" id="CHEBI:29105"/>
    </ligand>
</feature>
<evidence type="ECO:0000255" key="1">
    <source>
        <dbReference type="HAMAP-Rule" id="MF_00687"/>
    </source>
</evidence>
<gene>
    <name evidence="1" type="primary">kduI</name>
    <name type="ordered locus">EcSMS35_2991</name>
</gene>
<keyword id="KW-0413">Isomerase</keyword>
<keyword id="KW-0479">Metal-binding</keyword>
<keyword id="KW-0862">Zinc</keyword>
<name>KDUI_ECOSM</name>
<accession>B1LR41</accession>
<dbReference type="EC" id="5.3.1.17" evidence="1"/>
<dbReference type="EMBL" id="CP000970">
    <property type="protein sequence ID" value="ACB16454.1"/>
    <property type="molecule type" value="Genomic_DNA"/>
</dbReference>
<dbReference type="RefSeq" id="WP_000383251.1">
    <property type="nucleotide sequence ID" value="NC_010498.1"/>
</dbReference>
<dbReference type="SMR" id="B1LR41"/>
<dbReference type="KEGG" id="ecm:EcSMS35_2991"/>
<dbReference type="HOGENOM" id="CLU_062609_0_0_6"/>
<dbReference type="UniPathway" id="UPA00545">
    <property type="reaction ID" value="UER00826"/>
</dbReference>
<dbReference type="Proteomes" id="UP000007011">
    <property type="component" value="Chromosome"/>
</dbReference>
<dbReference type="GO" id="GO:0008697">
    <property type="term" value="F:4-deoxy-L-threo-5-hexosulose-uronate ketol-isomerase activity"/>
    <property type="evidence" value="ECO:0007669"/>
    <property type="project" value="UniProtKB-UniRule"/>
</dbReference>
<dbReference type="GO" id="GO:0008270">
    <property type="term" value="F:zinc ion binding"/>
    <property type="evidence" value="ECO:0007669"/>
    <property type="project" value="UniProtKB-UniRule"/>
</dbReference>
<dbReference type="GO" id="GO:0019698">
    <property type="term" value="P:D-galacturonate catabolic process"/>
    <property type="evidence" value="ECO:0007669"/>
    <property type="project" value="TreeGrafter"/>
</dbReference>
<dbReference type="GO" id="GO:0042840">
    <property type="term" value="P:D-glucuronate catabolic process"/>
    <property type="evidence" value="ECO:0007669"/>
    <property type="project" value="TreeGrafter"/>
</dbReference>
<dbReference type="GO" id="GO:0045490">
    <property type="term" value="P:pectin catabolic process"/>
    <property type="evidence" value="ECO:0007669"/>
    <property type="project" value="UniProtKB-UniRule"/>
</dbReference>
<dbReference type="CDD" id="cd20491">
    <property type="entry name" value="cupin_KduI_C"/>
    <property type="match status" value="1"/>
</dbReference>
<dbReference type="CDD" id="cd20294">
    <property type="entry name" value="cupin_KduI_N"/>
    <property type="match status" value="1"/>
</dbReference>
<dbReference type="FunFam" id="2.60.120.10:FF:000018">
    <property type="entry name" value="4-deoxy-L-threo-5-hexosulose-uronate ketol-isomerase"/>
    <property type="match status" value="1"/>
</dbReference>
<dbReference type="FunFam" id="2.60.120.520:FF:000001">
    <property type="entry name" value="4-deoxy-L-threo-5-hexosulose-uronate ketol-isomerase"/>
    <property type="match status" value="1"/>
</dbReference>
<dbReference type="Gene3D" id="2.60.120.10">
    <property type="entry name" value="Jelly Rolls"/>
    <property type="match status" value="1"/>
</dbReference>
<dbReference type="Gene3D" id="2.60.120.520">
    <property type="entry name" value="pectin degrading enzyme 5-keto 4- deoxyuronate isomerase, domain 1"/>
    <property type="match status" value="1"/>
</dbReference>
<dbReference type="HAMAP" id="MF_00687">
    <property type="entry name" value="KduI"/>
    <property type="match status" value="1"/>
</dbReference>
<dbReference type="InterPro" id="IPR007045">
    <property type="entry name" value="KduI"/>
</dbReference>
<dbReference type="InterPro" id="IPR021120">
    <property type="entry name" value="KduI/IolB_isomerase"/>
</dbReference>
<dbReference type="InterPro" id="IPR027449">
    <property type="entry name" value="KduI_N"/>
</dbReference>
<dbReference type="InterPro" id="IPR014710">
    <property type="entry name" value="RmlC-like_jellyroll"/>
</dbReference>
<dbReference type="InterPro" id="IPR011051">
    <property type="entry name" value="RmlC_Cupin_sf"/>
</dbReference>
<dbReference type="NCBIfam" id="NF002091">
    <property type="entry name" value="PRK00924.1"/>
    <property type="match status" value="1"/>
</dbReference>
<dbReference type="PANTHER" id="PTHR38461">
    <property type="entry name" value="4-DEOXY-L-THREO-5-HEXOSULOSE-URONATE KETOL-ISOMERASE"/>
    <property type="match status" value="1"/>
</dbReference>
<dbReference type="PANTHER" id="PTHR38461:SF1">
    <property type="entry name" value="4-DEOXY-L-THREO-5-HEXOSULOSE-URONATE KETOL-ISOMERASE"/>
    <property type="match status" value="1"/>
</dbReference>
<dbReference type="Pfam" id="PF04962">
    <property type="entry name" value="KduI"/>
    <property type="match status" value="1"/>
</dbReference>
<dbReference type="PIRSF" id="PIRSF006625">
    <property type="entry name" value="KduI"/>
    <property type="match status" value="1"/>
</dbReference>
<dbReference type="SUPFAM" id="SSF51182">
    <property type="entry name" value="RmlC-like cupins"/>
    <property type="match status" value="1"/>
</dbReference>